<organism>
    <name type="scientific">Leptospira interrogans serogroup Icterohaemorrhagiae serovar Lai (strain 56601)</name>
    <dbReference type="NCBI Taxonomy" id="189518"/>
    <lineage>
        <taxon>Bacteria</taxon>
        <taxon>Pseudomonadati</taxon>
        <taxon>Spirochaetota</taxon>
        <taxon>Spirochaetia</taxon>
        <taxon>Leptospirales</taxon>
        <taxon>Leptospiraceae</taxon>
        <taxon>Leptospira</taxon>
    </lineage>
</organism>
<feature type="chain" id="PRO_0000117123" description="tRNA uridine 5-carboxymethylaminomethyl modification enzyme MnmG">
    <location>
        <begin position="1"/>
        <end position="635"/>
    </location>
</feature>
<feature type="binding site" evidence="1">
    <location>
        <begin position="20"/>
        <end position="25"/>
    </location>
    <ligand>
        <name>FAD</name>
        <dbReference type="ChEBI" id="CHEBI:57692"/>
    </ligand>
</feature>
<feature type="binding site" evidence="1">
    <location>
        <begin position="279"/>
        <end position="293"/>
    </location>
    <ligand>
        <name>NAD(+)</name>
        <dbReference type="ChEBI" id="CHEBI:57540"/>
    </ligand>
</feature>
<accession>Q8EY59</accession>
<sequence length="635" mass="71947">MIESKNQSFFPNRFDCVVVGAGHAGSEAAYISSKGGARTLLITMNLDTIGQMSCNPAIGGIAKGHMVREVDALGGIMGKMIDNTGIQFKMLNTSKGPSVWAPRAQAEKKEYQLKVKHTLEAEKNLSIRQDTVEELIIENDQVIGVRTGRGFEIFTDHVILTTGTFLSSLVHIGTYQNENGRMCEPTVKGLSKSLAKYNLKLGRLKTGTPPRIHKNSVDLSVLTIQEGDSNPSPFSFSTDKITRKQIPCFITYTNAETHKLIHENLNLSPMYSGQIQSTGPRYCPSIEDKVVRFADRERHQVFLEPEGYETSEIYLNGVSTSLPEEVQWKLVRSLKGLENAEIVRPGYAIEYDYVDPTELKPTLETKKIKGLYHAGQINGTTGYEEAAAQGLVAAYSVLHSLRNLTPLLFKRSESYIGVLIDDLVHKGVEDPYRMFTSRAEHRLLLRQDNADQRLMKYGYDLGLVDQKSYDCMKEKYERVNSVREKIYQIPLKPSDKFQNLLDQKGITNYKFGMKLDSFLKRPEIKIKDIEFMIPEVSSWSDLEKSILEMEIKYEGYIKRELETIQWKNKYLDLAIPEDINYEMIAGLKKEAIQKLKSHKPMTLEKASQISGVDPSDVDLILYHIKGKKKQEVEIF</sequence>
<name>MNMG_LEPIN</name>
<gene>
    <name evidence="1" type="primary">mnmG</name>
    <name evidence="1" type="synonym">gidA</name>
    <name type="ordered locus">LA_4359</name>
</gene>
<proteinExistence type="inferred from homology"/>
<reference key="1">
    <citation type="journal article" date="2003" name="Nature">
        <title>Unique physiological and pathogenic features of Leptospira interrogans revealed by whole-genome sequencing.</title>
        <authorList>
            <person name="Ren S.-X."/>
            <person name="Fu G."/>
            <person name="Jiang X.-G."/>
            <person name="Zeng R."/>
            <person name="Miao Y.-G."/>
            <person name="Xu H."/>
            <person name="Zhang Y.-X."/>
            <person name="Xiong H."/>
            <person name="Lu G."/>
            <person name="Lu L.-F."/>
            <person name="Jiang H.-Q."/>
            <person name="Jia J."/>
            <person name="Tu Y.-F."/>
            <person name="Jiang J.-X."/>
            <person name="Gu W.-Y."/>
            <person name="Zhang Y.-Q."/>
            <person name="Cai Z."/>
            <person name="Sheng H.-H."/>
            <person name="Yin H.-F."/>
            <person name="Zhang Y."/>
            <person name="Zhu G.-F."/>
            <person name="Wan M."/>
            <person name="Huang H.-L."/>
            <person name="Qian Z."/>
            <person name="Wang S.-Y."/>
            <person name="Ma W."/>
            <person name="Yao Z.-J."/>
            <person name="Shen Y."/>
            <person name="Qiang B.-Q."/>
            <person name="Xia Q.-C."/>
            <person name="Guo X.-K."/>
            <person name="Danchin A."/>
            <person name="Saint Girons I."/>
            <person name="Somerville R.L."/>
            <person name="Wen Y.-M."/>
            <person name="Shi M.-H."/>
            <person name="Chen Z."/>
            <person name="Xu J.-G."/>
            <person name="Zhao G.-P."/>
        </authorList>
    </citation>
    <scope>NUCLEOTIDE SEQUENCE [LARGE SCALE GENOMIC DNA]</scope>
    <source>
        <strain>56601</strain>
    </source>
</reference>
<evidence type="ECO:0000255" key="1">
    <source>
        <dbReference type="HAMAP-Rule" id="MF_00129"/>
    </source>
</evidence>
<keyword id="KW-0963">Cytoplasm</keyword>
<keyword id="KW-0274">FAD</keyword>
<keyword id="KW-0285">Flavoprotein</keyword>
<keyword id="KW-0520">NAD</keyword>
<keyword id="KW-1185">Reference proteome</keyword>
<keyword id="KW-0819">tRNA processing</keyword>
<protein>
    <recommendedName>
        <fullName evidence="1">tRNA uridine 5-carboxymethylaminomethyl modification enzyme MnmG</fullName>
    </recommendedName>
    <alternativeName>
        <fullName evidence="1">Glucose-inhibited division protein A</fullName>
    </alternativeName>
</protein>
<comment type="function">
    <text evidence="1">NAD-binding protein involved in the addition of a carboxymethylaminomethyl (cmnm) group at the wobble position (U34) of certain tRNAs, forming tRNA-cmnm(5)s(2)U34.</text>
</comment>
<comment type="cofactor">
    <cofactor evidence="1">
        <name>FAD</name>
        <dbReference type="ChEBI" id="CHEBI:57692"/>
    </cofactor>
</comment>
<comment type="subunit">
    <text evidence="1">Homodimer. Heterotetramer of two MnmE and two MnmG subunits.</text>
</comment>
<comment type="subcellular location">
    <subcellularLocation>
        <location evidence="1">Cytoplasm</location>
    </subcellularLocation>
</comment>
<comment type="similarity">
    <text evidence="1">Belongs to the MnmG family.</text>
</comment>
<dbReference type="EMBL" id="AE010300">
    <property type="protein sequence ID" value="AAN51557.1"/>
    <property type="molecule type" value="Genomic_DNA"/>
</dbReference>
<dbReference type="RefSeq" id="NP_714539.1">
    <property type="nucleotide sequence ID" value="NC_004342.2"/>
</dbReference>
<dbReference type="RefSeq" id="WP_000572982.1">
    <property type="nucleotide sequence ID" value="NC_004342.2"/>
</dbReference>
<dbReference type="SMR" id="Q8EY59"/>
<dbReference type="FunCoup" id="Q8EY59">
    <property type="interactions" value="525"/>
</dbReference>
<dbReference type="STRING" id="189518.LA_4359"/>
<dbReference type="PaxDb" id="189518-LA_4359"/>
<dbReference type="EnsemblBacteria" id="AAN51557">
    <property type="protein sequence ID" value="AAN51557"/>
    <property type="gene ID" value="LA_4359"/>
</dbReference>
<dbReference type="KEGG" id="lil:LA_4359"/>
<dbReference type="PATRIC" id="fig|189518.3.peg.4325"/>
<dbReference type="HOGENOM" id="CLU_007831_2_2_12"/>
<dbReference type="InParanoid" id="Q8EY59"/>
<dbReference type="OrthoDB" id="9815560at2"/>
<dbReference type="Proteomes" id="UP000001408">
    <property type="component" value="Chromosome I"/>
</dbReference>
<dbReference type="GO" id="GO:0005829">
    <property type="term" value="C:cytosol"/>
    <property type="evidence" value="ECO:0000318"/>
    <property type="project" value="GO_Central"/>
</dbReference>
<dbReference type="GO" id="GO:0050660">
    <property type="term" value="F:flavin adenine dinucleotide binding"/>
    <property type="evidence" value="ECO:0000318"/>
    <property type="project" value="GO_Central"/>
</dbReference>
<dbReference type="GO" id="GO:0030488">
    <property type="term" value="P:tRNA methylation"/>
    <property type="evidence" value="ECO:0000318"/>
    <property type="project" value="GO_Central"/>
</dbReference>
<dbReference type="GO" id="GO:0002098">
    <property type="term" value="P:tRNA wobble uridine modification"/>
    <property type="evidence" value="ECO:0000318"/>
    <property type="project" value="GO_Central"/>
</dbReference>
<dbReference type="FunFam" id="1.10.150.570:FF:000001">
    <property type="entry name" value="tRNA uridine 5-carboxymethylaminomethyl modification enzyme MnmG"/>
    <property type="match status" value="1"/>
</dbReference>
<dbReference type="FunFam" id="3.50.50.60:FF:000002">
    <property type="entry name" value="tRNA uridine 5-carboxymethylaminomethyl modification enzyme MnmG"/>
    <property type="match status" value="1"/>
</dbReference>
<dbReference type="FunFam" id="3.50.50.60:FF:000010">
    <property type="entry name" value="tRNA uridine 5-carboxymethylaminomethyl modification enzyme MnmG"/>
    <property type="match status" value="1"/>
</dbReference>
<dbReference type="Gene3D" id="3.50.50.60">
    <property type="entry name" value="FAD/NAD(P)-binding domain"/>
    <property type="match status" value="2"/>
</dbReference>
<dbReference type="Gene3D" id="1.10.150.570">
    <property type="entry name" value="GidA associated domain, C-terminal subdomain"/>
    <property type="match status" value="1"/>
</dbReference>
<dbReference type="Gene3D" id="1.10.10.1800">
    <property type="entry name" value="tRNA uridine 5-carboxymethylaminomethyl modification enzyme MnmG/GidA"/>
    <property type="match status" value="1"/>
</dbReference>
<dbReference type="HAMAP" id="MF_00129">
    <property type="entry name" value="MnmG_GidA"/>
    <property type="match status" value="1"/>
</dbReference>
<dbReference type="InterPro" id="IPR036188">
    <property type="entry name" value="FAD/NAD-bd_sf"/>
</dbReference>
<dbReference type="InterPro" id="IPR049312">
    <property type="entry name" value="GIDA_C_N"/>
</dbReference>
<dbReference type="InterPro" id="IPR004416">
    <property type="entry name" value="MnmG"/>
</dbReference>
<dbReference type="InterPro" id="IPR002218">
    <property type="entry name" value="MnmG-rel"/>
</dbReference>
<dbReference type="InterPro" id="IPR020595">
    <property type="entry name" value="MnmG-rel_CS"/>
</dbReference>
<dbReference type="InterPro" id="IPR026904">
    <property type="entry name" value="MnmG_C"/>
</dbReference>
<dbReference type="InterPro" id="IPR047001">
    <property type="entry name" value="MnmG_C_subdom"/>
</dbReference>
<dbReference type="InterPro" id="IPR044920">
    <property type="entry name" value="MnmG_C_subdom_sf"/>
</dbReference>
<dbReference type="InterPro" id="IPR040131">
    <property type="entry name" value="MnmG_N"/>
</dbReference>
<dbReference type="NCBIfam" id="TIGR00136">
    <property type="entry name" value="mnmG_gidA"/>
    <property type="match status" value="1"/>
</dbReference>
<dbReference type="PANTHER" id="PTHR11806">
    <property type="entry name" value="GLUCOSE INHIBITED DIVISION PROTEIN A"/>
    <property type="match status" value="1"/>
</dbReference>
<dbReference type="PANTHER" id="PTHR11806:SF0">
    <property type="entry name" value="PROTEIN MTO1 HOMOLOG, MITOCHONDRIAL"/>
    <property type="match status" value="1"/>
</dbReference>
<dbReference type="Pfam" id="PF01134">
    <property type="entry name" value="GIDA"/>
    <property type="match status" value="1"/>
</dbReference>
<dbReference type="Pfam" id="PF21680">
    <property type="entry name" value="GIDA_C_1st"/>
    <property type="match status" value="1"/>
</dbReference>
<dbReference type="Pfam" id="PF13932">
    <property type="entry name" value="SAM_GIDA_C"/>
    <property type="match status" value="1"/>
</dbReference>
<dbReference type="SMART" id="SM01228">
    <property type="entry name" value="GIDA_assoc_3"/>
    <property type="match status" value="1"/>
</dbReference>
<dbReference type="SUPFAM" id="SSF51905">
    <property type="entry name" value="FAD/NAD(P)-binding domain"/>
    <property type="match status" value="1"/>
</dbReference>
<dbReference type="PROSITE" id="PS01280">
    <property type="entry name" value="GIDA_1"/>
    <property type="match status" value="1"/>
</dbReference>